<keyword id="KW-0963">Cytoplasm</keyword>
<keyword id="KW-0378">Hydrolase</keyword>
<keyword id="KW-0645">Protease</keyword>
<keyword id="KW-0788">Thiol protease</keyword>
<gene>
    <name evidence="1" type="primary">pcp</name>
    <name type="ordered locus">YPA_2436</name>
</gene>
<comment type="function">
    <text evidence="1">Removes 5-oxoproline from various penultimate amino acid residues except L-proline.</text>
</comment>
<comment type="catalytic activity">
    <reaction evidence="1">
        <text>Release of an N-terminal pyroglutamyl group from a polypeptide, the second amino acid generally not being Pro.</text>
        <dbReference type="EC" id="3.4.19.3"/>
    </reaction>
</comment>
<comment type="subunit">
    <text evidence="1">Homotetramer.</text>
</comment>
<comment type="subcellular location">
    <subcellularLocation>
        <location evidence="1">Cytoplasm</location>
    </subcellularLocation>
</comment>
<comment type="similarity">
    <text evidence="1">Belongs to the peptidase C15 family.</text>
</comment>
<sequence length="215" mass="23142">MRRVLITGFEPFGGERINPSWEVVKQMNDLMMGGVRIVARQLPCAFGEALTALNTAIDDVQPVLVLAIGQAGGRADITIERVAINVDDARIPDNLGNQPVDQPIIQEGPAAYFTRLPIKAMVQGIREAGIPASVSQTAGTYVCNHVMYGLLHRLNQFNNEVKGGFIHIPYLPEQAVDHPGAPSMSAQSVLVALELAISIALQIEHDLHITGGAVH</sequence>
<reference key="1">
    <citation type="journal article" date="2006" name="J. Bacteriol.">
        <title>Complete genome sequence of Yersinia pestis strains Antiqua and Nepal516: evidence of gene reduction in an emerging pathogen.</title>
        <authorList>
            <person name="Chain P.S.G."/>
            <person name="Hu P."/>
            <person name="Malfatti S.A."/>
            <person name="Radnedge L."/>
            <person name="Larimer F."/>
            <person name="Vergez L.M."/>
            <person name="Worsham P."/>
            <person name="Chu M.C."/>
            <person name="Andersen G.L."/>
        </authorList>
    </citation>
    <scope>NUCLEOTIDE SEQUENCE [LARGE SCALE GENOMIC DNA]</scope>
    <source>
        <strain>Antiqua</strain>
    </source>
</reference>
<feature type="chain" id="PRO_1000050156" description="Pyrrolidone-carboxylate peptidase">
    <location>
        <begin position="1"/>
        <end position="215"/>
    </location>
</feature>
<feature type="active site" evidence="1">
    <location>
        <position position="80"/>
    </location>
</feature>
<feature type="active site" evidence="1">
    <location>
        <position position="143"/>
    </location>
</feature>
<feature type="active site" evidence="1">
    <location>
        <position position="167"/>
    </location>
</feature>
<proteinExistence type="inferred from homology"/>
<protein>
    <recommendedName>
        <fullName evidence="1">Pyrrolidone-carboxylate peptidase</fullName>
        <ecNumber evidence="1">3.4.19.3</ecNumber>
    </recommendedName>
    <alternativeName>
        <fullName evidence="1">5-oxoprolyl-peptidase</fullName>
    </alternativeName>
    <alternativeName>
        <fullName evidence="1">Pyroglutamyl-peptidase I</fullName>
        <shortName evidence="1">PGP-I</shortName>
        <shortName evidence="1">Pyrase</shortName>
    </alternativeName>
</protein>
<name>PCP_YERPA</name>
<organism>
    <name type="scientific">Yersinia pestis bv. Antiqua (strain Antiqua)</name>
    <dbReference type="NCBI Taxonomy" id="360102"/>
    <lineage>
        <taxon>Bacteria</taxon>
        <taxon>Pseudomonadati</taxon>
        <taxon>Pseudomonadota</taxon>
        <taxon>Gammaproteobacteria</taxon>
        <taxon>Enterobacterales</taxon>
        <taxon>Yersiniaceae</taxon>
        <taxon>Yersinia</taxon>
    </lineage>
</organism>
<accession>Q1C571</accession>
<evidence type="ECO:0000255" key="1">
    <source>
        <dbReference type="HAMAP-Rule" id="MF_00417"/>
    </source>
</evidence>
<dbReference type="EC" id="3.4.19.3" evidence="1"/>
<dbReference type="EMBL" id="CP000308">
    <property type="protein sequence ID" value="ABG14401.1"/>
    <property type="molecule type" value="Genomic_DNA"/>
</dbReference>
<dbReference type="RefSeq" id="WP_002209662.1">
    <property type="nucleotide sequence ID" value="NZ_CP009906.1"/>
</dbReference>
<dbReference type="SMR" id="Q1C571"/>
<dbReference type="MEROPS" id="C15.001"/>
<dbReference type="GeneID" id="57975988"/>
<dbReference type="KEGG" id="ypa:YPA_2436"/>
<dbReference type="Proteomes" id="UP000001971">
    <property type="component" value="Chromosome"/>
</dbReference>
<dbReference type="GO" id="GO:0005829">
    <property type="term" value="C:cytosol"/>
    <property type="evidence" value="ECO:0007669"/>
    <property type="project" value="InterPro"/>
</dbReference>
<dbReference type="GO" id="GO:0016920">
    <property type="term" value="F:pyroglutamyl-peptidase activity"/>
    <property type="evidence" value="ECO:0007669"/>
    <property type="project" value="UniProtKB-UniRule"/>
</dbReference>
<dbReference type="GO" id="GO:0006508">
    <property type="term" value="P:proteolysis"/>
    <property type="evidence" value="ECO:0007669"/>
    <property type="project" value="UniProtKB-KW"/>
</dbReference>
<dbReference type="CDD" id="cd00501">
    <property type="entry name" value="Peptidase_C15"/>
    <property type="match status" value="1"/>
</dbReference>
<dbReference type="FunFam" id="3.40.630.20:FF:000001">
    <property type="entry name" value="Pyrrolidone-carboxylate peptidase"/>
    <property type="match status" value="1"/>
</dbReference>
<dbReference type="Gene3D" id="3.40.630.20">
    <property type="entry name" value="Peptidase C15, pyroglutamyl peptidase I-like"/>
    <property type="match status" value="1"/>
</dbReference>
<dbReference type="HAMAP" id="MF_00417">
    <property type="entry name" value="Pyrrolid_peptidase"/>
    <property type="match status" value="1"/>
</dbReference>
<dbReference type="InterPro" id="IPR000816">
    <property type="entry name" value="Peptidase_C15"/>
</dbReference>
<dbReference type="InterPro" id="IPR016125">
    <property type="entry name" value="Peptidase_C15-like"/>
</dbReference>
<dbReference type="InterPro" id="IPR036440">
    <property type="entry name" value="Peptidase_C15-like_sf"/>
</dbReference>
<dbReference type="InterPro" id="IPR029762">
    <property type="entry name" value="PGP-I_bact-type"/>
</dbReference>
<dbReference type="InterPro" id="IPR033694">
    <property type="entry name" value="PGPEP1_Cys_AS"/>
</dbReference>
<dbReference type="InterPro" id="IPR033693">
    <property type="entry name" value="PGPEP1_Glu_AS"/>
</dbReference>
<dbReference type="NCBIfam" id="NF009676">
    <property type="entry name" value="PRK13197.1"/>
    <property type="match status" value="1"/>
</dbReference>
<dbReference type="NCBIfam" id="TIGR00504">
    <property type="entry name" value="pyro_pdase"/>
    <property type="match status" value="1"/>
</dbReference>
<dbReference type="PANTHER" id="PTHR23402">
    <property type="entry name" value="PROTEASE FAMILY C15 PYROGLUTAMYL-PEPTIDASE I-RELATED"/>
    <property type="match status" value="1"/>
</dbReference>
<dbReference type="PANTHER" id="PTHR23402:SF1">
    <property type="entry name" value="PYROGLUTAMYL-PEPTIDASE I"/>
    <property type="match status" value="1"/>
</dbReference>
<dbReference type="Pfam" id="PF01470">
    <property type="entry name" value="Peptidase_C15"/>
    <property type="match status" value="1"/>
</dbReference>
<dbReference type="PIRSF" id="PIRSF015592">
    <property type="entry name" value="Prld-crbxl_pptds"/>
    <property type="match status" value="1"/>
</dbReference>
<dbReference type="PRINTS" id="PR00706">
    <property type="entry name" value="PYROGLUPTASE"/>
</dbReference>
<dbReference type="SUPFAM" id="SSF53182">
    <property type="entry name" value="Pyrrolidone carboxyl peptidase (pyroglutamate aminopeptidase)"/>
    <property type="match status" value="1"/>
</dbReference>
<dbReference type="PROSITE" id="PS01334">
    <property type="entry name" value="PYRASE_CYS"/>
    <property type="match status" value="1"/>
</dbReference>
<dbReference type="PROSITE" id="PS01333">
    <property type="entry name" value="PYRASE_GLU"/>
    <property type="match status" value="1"/>
</dbReference>